<dbReference type="EMBL" id="U33761">
    <property type="protein sequence ID" value="AAC50242.1"/>
    <property type="status" value="ALT_INIT"/>
    <property type="molecule type" value="mRNA"/>
</dbReference>
<dbReference type="EMBL" id="AB050979">
    <property type="protein sequence ID" value="BAB87200.1"/>
    <property type="molecule type" value="mRNA"/>
</dbReference>
<dbReference type="EMBL" id="AB050980">
    <property type="protein sequence ID" value="BAB87201.1"/>
    <property type="molecule type" value="mRNA"/>
</dbReference>
<dbReference type="EMBL" id="AB050981">
    <property type="protein sequence ID" value="BAB87202.1"/>
    <property type="status" value="ALT_SEQ"/>
    <property type="molecule type" value="mRNA"/>
</dbReference>
<dbReference type="EMBL" id="AY029177">
    <property type="protein sequence ID" value="AAK31593.1"/>
    <property type="molecule type" value="mRNA"/>
</dbReference>
<dbReference type="EMBL" id="AK291255">
    <property type="protein sequence ID" value="BAF83944.1"/>
    <property type="molecule type" value="mRNA"/>
</dbReference>
<dbReference type="EMBL" id="AK296223">
    <property type="protein sequence ID" value="BAG58946.1"/>
    <property type="molecule type" value="mRNA"/>
</dbReference>
<dbReference type="EMBL" id="AC008942">
    <property type="status" value="NOT_ANNOTATED_CDS"/>
    <property type="molecule type" value="Genomic_DNA"/>
</dbReference>
<dbReference type="EMBL" id="CH471119">
    <property type="protein sequence ID" value="EAW55936.1"/>
    <property type="molecule type" value="Genomic_DNA"/>
</dbReference>
<dbReference type="EMBL" id="BC001441">
    <property type="protein sequence ID" value="AAH01441.1"/>
    <property type="molecule type" value="mRNA"/>
</dbReference>
<dbReference type="EMBL" id="BC007441">
    <property type="protein sequence ID" value="AAH07441.1"/>
    <property type="molecule type" value="mRNA"/>
</dbReference>
<dbReference type="CCDS" id="CCDS3915.1">
    <molecule id="Q13309-2"/>
</dbReference>
<dbReference type="CCDS" id="CCDS3916.1">
    <molecule id="Q13309-1"/>
</dbReference>
<dbReference type="PIR" id="I39171">
    <property type="entry name" value="I39171"/>
</dbReference>
<dbReference type="RefSeq" id="NP_001230049.1">
    <molecule id="Q13309-4"/>
    <property type="nucleotide sequence ID" value="NM_001243120.2"/>
</dbReference>
<dbReference type="RefSeq" id="NP_005974.2">
    <molecule id="Q13309-1"/>
    <property type="nucleotide sequence ID" value="NM_005983.3"/>
</dbReference>
<dbReference type="RefSeq" id="NP_116026.1">
    <molecule id="Q13309-2"/>
    <property type="nucleotide sequence ID" value="NM_032637.4"/>
</dbReference>
<dbReference type="PDB" id="1FQV">
    <property type="method" value="X-ray"/>
    <property type="resolution" value="2.80 A"/>
    <property type="chains" value="A/C/E/G/I/K/M/O=89-424"/>
</dbReference>
<dbReference type="PDB" id="1FS1">
    <property type="method" value="X-ray"/>
    <property type="resolution" value="1.80 A"/>
    <property type="chains" value="A/C=89-141"/>
</dbReference>
<dbReference type="PDB" id="1FS2">
    <property type="method" value="X-ray"/>
    <property type="resolution" value="2.90 A"/>
    <property type="chains" value="A/C=89-398"/>
</dbReference>
<dbReference type="PDB" id="1LDK">
    <property type="method" value="X-ray"/>
    <property type="resolution" value="3.10 A"/>
    <property type="chains" value="E=97-137"/>
</dbReference>
<dbReference type="PDB" id="2ASS">
    <property type="method" value="X-ray"/>
    <property type="resolution" value="3.00 A"/>
    <property type="chains" value="B=89-424"/>
</dbReference>
<dbReference type="PDB" id="2AST">
    <property type="method" value="X-ray"/>
    <property type="resolution" value="2.30 A"/>
    <property type="chains" value="B=89-424"/>
</dbReference>
<dbReference type="PDB" id="7B5L">
    <property type="method" value="EM"/>
    <property type="resolution" value="3.80 A"/>
    <property type="chains" value="T=1-424"/>
</dbReference>
<dbReference type="PDB" id="7B5M">
    <property type="method" value="EM"/>
    <property type="resolution" value="3.91 A"/>
    <property type="chains" value="T=1-424"/>
</dbReference>
<dbReference type="PDB" id="7B5R">
    <property type="method" value="EM"/>
    <property type="resolution" value="3.80 A"/>
    <property type="chains" value="T=1-424"/>
</dbReference>
<dbReference type="PDB" id="7LUO">
    <property type="method" value="X-ray"/>
    <property type="resolution" value="3.17 A"/>
    <property type="chains" value="A/C=17-83"/>
</dbReference>
<dbReference type="PDB" id="7Z8T">
    <property type="method" value="EM"/>
    <property type="resolution" value="3.00 A"/>
    <property type="chains" value="F=1-424"/>
</dbReference>
<dbReference type="PDB" id="7Z8V">
    <property type="method" value="EM"/>
    <property type="resolution" value="2.70 A"/>
    <property type="chains" value="F=1-424"/>
</dbReference>
<dbReference type="PDB" id="7ZBW">
    <property type="method" value="EM"/>
    <property type="resolution" value="3.50 A"/>
    <property type="chains" value="F=1-424"/>
</dbReference>
<dbReference type="PDB" id="7ZBZ">
    <property type="method" value="EM"/>
    <property type="resolution" value="3.10 A"/>
    <property type="chains" value="F=1-424"/>
</dbReference>
<dbReference type="PDB" id="8BYA">
    <property type="method" value="EM"/>
    <property type="resolution" value="3.38 A"/>
    <property type="chains" value="E=1-424"/>
</dbReference>
<dbReference type="PDB" id="8BYL">
    <property type="method" value="EM"/>
    <property type="resolution" value="3.50 A"/>
    <property type="chains" value="B=1-424"/>
</dbReference>
<dbReference type="PDB" id="8CDJ">
    <property type="method" value="EM"/>
    <property type="resolution" value="3.40 A"/>
    <property type="chains" value="F=1-424"/>
</dbReference>
<dbReference type="PDB" id="8CDK">
    <property type="method" value="EM"/>
    <property type="resolution" value="3.32 A"/>
    <property type="chains" value="F=1-424"/>
</dbReference>
<dbReference type="PDB" id="8OR0">
    <property type="method" value="EM"/>
    <property type="resolution" value="3.10 A"/>
    <property type="chains" value="E=1-424"/>
</dbReference>
<dbReference type="PDB" id="8OR3">
    <property type="method" value="EM"/>
    <property type="resolution" value="2.90 A"/>
    <property type="chains" value="E=1-424"/>
</dbReference>
<dbReference type="PDB" id="8OR4">
    <property type="method" value="EM"/>
    <property type="resolution" value="3.80 A"/>
    <property type="chains" value="E=1-424"/>
</dbReference>
<dbReference type="PDBsum" id="1FQV"/>
<dbReference type="PDBsum" id="1FS1"/>
<dbReference type="PDBsum" id="1FS2"/>
<dbReference type="PDBsum" id="1LDK"/>
<dbReference type="PDBsum" id="2ASS"/>
<dbReference type="PDBsum" id="2AST"/>
<dbReference type="PDBsum" id="7B5L"/>
<dbReference type="PDBsum" id="7B5M"/>
<dbReference type="PDBsum" id="7B5R"/>
<dbReference type="PDBsum" id="7LUO"/>
<dbReference type="PDBsum" id="7Z8T"/>
<dbReference type="PDBsum" id="7Z8V"/>
<dbReference type="PDBsum" id="7ZBW"/>
<dbReference type="PDBsum" id="7ZBZ"/>
<dbReference type="PDBsum" id="8BYA"/>
<dbReference type="PDBsum" id="8BYL"/>
<dbReference type="PDBsum" id="8CDJ"/>
<dbReference type="PDBsum" id="8CDK"/>
<dbReference type="PDBsum" id="8OR0"/>
<dbReference type="PDBsum" id="8OR3"/>
<dbReference type="PDBsum" id="8OR4"/>
<dbReference type="EMDB" id="EMD-12037"/>
<dbReference type="EMDB" id="EMD-12048"/>
<dbReference type="EMDB" id="EMD-14563"/>
<dbReference type="EMDB" id="EMD-14564"/>
<dbReference type="EMDB" id="EMD-14594"/>
<dbReference type="EMDB" id="EMD-14597"/>
<dbReference type="EMDB" id="EMD-16325"/>
<dbReference type="EMDB" id="EMD-16327"/>
<dbReference type="EMDB" id="EMD-16575"/>
<dbReference type="EMDB" id="EMD-16576"/>
<dbReference type="EMDB" id="EMD-17114"/>
<dbReference type="EMDB" id="EMD-17116"/>
<dbReference type="EMDB" id="EMD-17117"/>
<dbReference type="EMDB" id="EMD-3401"/>
<dbReference type="SMR" id="Q13309"/>
<dbReference type="BioGRID" id="112393">
    <property type="interactions" value="303"/>
</dbReference>
<dbReference type="ComplexPortal" id="CPX-3295">
    <property type="entry name" value="SCF E3 ubiquitin ligase complex, SKP2 variant"/>
</dbReference>
<dbReference type="CORUM" id="Q13309"/>
<dbReference type="DIP" id="DIP-17011N"/>
<dbReference type="FunCoup" id="Q13309">
    <property type="interactions" value="2814"/>
</dbReference>
<dbReference type="IntAct" id="Q13309">
    <property type="interactions" value="128"/>
</dbReference>
<dbReference type="MINT" id="Q13309"/>
<dbReference type="STRING" id="9606.ENSP00000274255"/>
<dbReference type="BindingDB" id="Q13309"/>
<dbReference type="ChEMBL" id="CHEMBL3632458"/>
<dbReference type="GuidetoPHARMACOLOGY" id="3235"/>
<dbReference type="GlyGen" id="Q13309">
    <property type="glycosylation" value="2 sites, 1 N-linked glycan (1 site), 1 O-linked glycan (1 site)"/>
</dbReference>
<dbReference type="iPTMnet" id="Q13309"/>
<dbReference type="PhosphoSitePlus" id="Q13309"/>
<dbReference type="BioMuta" id="SKP2"/>
<dbReference type="DMDM" id="37537922"/>
<dbReference type="CPTAC" id="CPTAC-1267"/>
<dbReference type="jPOST" id="Q13309"/>
<dbReference type="MassIVE" id="Q13309"/>
<dbReference type="PaxDb" id="9606-ENSP00000274255"/>
<dbReference type="PeptideAtlas" id="Q13309"/>
<dbReference type="ProteomicsDB" id="4402"/>
<dbReference type="ProteomicsDB" id="59298">
    <molecule id="Q13309-1"/>
</dbReference>
<dbReference type="ProteomicsDB" id="59299">
    <molecule id="Q13309-2"/>
</dbReference>
<dbReference type="Pumba" id="Q13309"/>
<dbReference type="TopDownProteomics" id="Q13309-1">
    <molecule id="Q13309-1"/>
</dbReference>
<dbReference type="Antibodypedia" id="22921">
    <property type="antibodies" value="463 antibodies from 41 providers"/>
</dbReference>
<dbReference type="DNASU" id="6502"/>
<dbReference type="Ensembl" id="ENST00000274254.9">
    <molecule id="Q13309-2"/>
    <property type="protein sequence ID" value="ENSP00000274254.5"/>
    <property type="gene ID" value="ENSG00000145604.17"/>
</dbReference>
<dbReference type="Ensembl" id="ENST00000274255.11">
    <molecule id="Q13309-1"/>
    <property type="protein sequence ID" value="ENSP00000274255.6"/>
    <property type="gene ID" value="ENSG00000145604.17"/>
</dbReference>
<dbReference type="GeneID" id="6502"/>
<dbReference type="KEGG" id="hsa:6502"/>
<dbReference type="MANE-Select" id="ENST00000274255.11">
    <property type="protein sequence ID" value="ENSP00000274255.6"/>
    <property type="RefSeq nucleotide sequence ID" value="NM_005983.4"/>
    <property type="RefSeq protein sequence ID" value="NP_005974.2"/>
</dbReference>
<dbReference type="UCSC" id="uc003jkc.3">
    <molecule id="Q13309-1"/>
    <property type="organism name" value="human"/>
</dbReference>
<dbReference type="AGR" id="HGNC:10901"/>
<dbReference type="CTD" id="6502"/>
<dbReference type="DisGeNET" id="6502"/>
<dbReference type="GeneCards" id="SKP2"/>
<dbReference type="HGNC" id="HGNC:10901">
    <property type="gene designation" value="SKP2"/>
</dbReference>
<dbReference type="HPA" id="ENSG00000145604">
    <property type="expression patterns" value="Tissue enhanced (placenta)"/>
</dbReference>
<dbReference type="MIM" id="601436">
    <property type="type" value="gene"/>
</dbReference>
<dbReference type="neXtProt" id="NX_Q13309"/>
<dbReference type="OpenTargets" id="ENSG00000145604"/>
<dbReference type="PharmGKB" id="PA35801"/>
<dbReference type="VEuPathDB" id="HostDB:ENSG00000145604"/>
<dbReference type="eggNOG" id="KOG2120">
    <property type="taxonomic scope" value="Eukaryota"/>
</dbReference>
<dbReference type="GeneTree" id="ENSGT00390000007918"/>
<dbReference type="HOGENOM" id="CLU_1389772_0_0_1"/>
<dbReference type="InParanoid" id="Q13309"/>
<dbReference type="OMA" id="CDFTADH"/>
<dbReference type="OrthoDB" id="2095648at2759"/>
<dbReference type="PAN-GO" id="Q13309">
    <property type="GO annotations" value="6 GO annotations based on evolutionary models"/>
</dbReference>
<dbReference type="PhylomeDB" id="Q13309"/>
<dbReference type="TreeFam" id="TF352582"/>
<dbReference type="BioCyc" id="MetaCyc:ENSG00000145604-MONOMER"/>
<dbReference type="PathwayCommons" id="Q13309"/>
<dbReference type="Reactome" id="R-HSA-174178">
    <property type="pathway name" value="APC/C:Cdh1 mediated degradation of Cdc20 and other APC/C:Cdh1 targeted proteins in late mitosis/early G1"/>
</dbReference>
<dbReference type="Reactome" id="R-HSA-187577">
    <property type="pathway name" value="SCF(Skp2)-mediated degradation of p27/p21"/>
</dbReference>
<dbReference type="Reactome" id="R-HSA-5689880">
    <property type="pathway name" value="Ub-specific processing proteases"/>
</dbReference>
<dbReference type="Reactome" id="R-HSA-68949">
    <property type="pathway name" value="Orc1 removal from chromatin"/>
</dbReference>
<dbReference type="Reactome" id="R-HSA-69231">
    <property type="pathway name" value="Cyclin D associated events in G1"/>
</dbReference>
<dbReference type="Reactome" id="R-HSA-8939902">
    <property type="pathway name" value="Regulation of RUNX2 expression and activity"/>
</dbReference>
<dbReference type="Reactome" id="R-HSA-8951664">
    <property type="pathway name" value="Neddylation"/>
</dbReference>
<dbReference type="Reactome" id="R-HSA-9687136">
    <property type="pathway name" value="Aberrant regulation of mitotic exit in cancer due to RB1 defects"/>
</dbReference>
<dbReference type="Reactome" id="R-HSA-9708530">
    <property type="pathway name" value="Regulation of BACH1 activity"/>
</dbReference>
<dbReference type="Reactome" id="R-HSA-983168">
    <property type="pathway name" value="Antigen processing: Ubiquitination &amp; Proteasome degradation"/>
</dbReference>
<dbReference type="SignaLink" id="Q13309"/>
<dbReference type="SIGNOR" id="Q13309"/>
<dbReference type="UniPathway" id="UPA00143"/>
<dbReference type="BioGRID-ORCS" id="6502">
    <property type="hits" value="443 hits in 1194 CRISPR screens"/>
</dbReference>
<dbReference type="EvolutionaryTrace" id="Q13309"/>
<dbReference type="GeneWiki" id="SKP2"/>
<dbReference type="GenomeRNAi" id="6502"/>
<dbReference type="Pharos" id="Q13309">
    <property type="development level" value="Tbio"/>
</dbReference>
<dbReference type="PRO" id="PR:Q13309"/>
<dbReference type="Proteomes" id="UP000005640">
    <property type="component" value="Chromosome 5"/>
</dbReference>
<dbReference type="RNAct" id="Q13309">
    <property type="molecule type" value="protein"/>
</dbReference>
<dbReference type="Bgee" id="ENSG00000145604">
    <property type="expression patterns" value="Expressed in oocyte and 203 other cell types or tissues"/>
</dbReference>
<dbReference type="ExpressionAtlas" id="Q13309">
    <property type="expression patterns" value="baseline and differential"/>
</dbReference>
<dbReference type="GO" id="GO:0005829">
    <property type="term" value="C:cytosol"/>
    <property type="evidence" value="ECO:0000314"/>
    <property type="project" value="HPA"/>
</dbReference>
<dbReference type="GO" id="GO:0005730">
    <property type="term" value="C:nucleolus"/>
    <property type="evidence" value="ECO:0000314"/>
    <property type="project" value="HPA"/>
</dbReference>
<dbReference type="GO" id="GO:0005654">
    <property type="term" value="C:nucleoplasm"/>
    <property type="evidence" value="ECO:0000314"/>
    <property type="project" value="HPA"/>
</dbReference>
<dbReference type="GO" id="GO:0005634">
    <property type="term" value="C:nucleus"/>
    <property type="evidence" value="ECO:0000318"/>
    <property type="project" value="GO_Central"/>
</dbReference>
<dbReference type="GO" id="GO:0019005">
    <property type="term" value="C:SCF ubiquitin ligase complex"/>
    <property type="evidence" value="ECO:0000314"/>
    <property type="project" value="UniProtKB"/>
</dbReference>
<dbReference type="GO" id="GO:0042802">
    <property type="term" value="F:identical protein binding"/>
    <property type="evidence" value="ECO:0000353"/>
    <property type="project" value="IntAct"/>
</dbReference>
<dbReference type="GO" id="GO:1990756">
    <property type="term" value="F:ubiquitin-like ligase-substrate adaptor activity"/>
    <property type="evidence" value="ECO:0000314"/>
    <property type="project" value="UniProtKB"/>
</dbReference>
<dbReference type="GO" id="GO:0071460">
    <property type="term" value="P:cellular response to cell-matrix adhesion"/>
    <property type="evidence" value="ECO:0007669"/>
    <property type="project" value="Ensembl"/>
</dbReference>
<dbReference type="GO" id="GO:0051607">
    <property type="term" value="P:defense response to virus"/>
    <property type="evidence" value="ECO:0000315"/>
    <property type="project" value="UniProtKB"/>
</dbReference>
<dbReference type="GO" id="GO:0000082">
    <property type="term" value="P:G1/S transition of mitotic cell cycle"/>
    <property type="evidence" value="ECO:0000304"/>
    <property type="project" value="ProtInc"/>
</dbReference>
<dbReference type="GO" id="GO:0000086">
    <property type="term" value="P:G2/M transition of mitotic cell cycle"/>
    <property type="evidence" value="ECO:0000318"/>
    <property type="project" value="GO_Central"/>
</dbReference>
<dbReference type="GO" id="GO:0045087">
    <property type="term" value="P:innate immune response"/>
    <property type="evidence" value="ECO:0000315"/>
    <property type="project" value="UniProtKB"/>
</dbReference>
<dbReference type="GO" id="GO:1905168">
    <property type="term" value="P:positive regulation of double-strand break repair via homologous recombination"/>
    <property type="evidence" value="ECO:0000314"/>
    <property type="project" value="UniProtKB"/>
</dbReference>
<dbReference type="GO" id="GO:0033148">
    <property type="term" value="P:positive regulation of intracellular estrogen receptor signaling pathway"/>
    <property type="evidence" value="ECO:0007669"/>
    <property type="project" value="Ensembl"/>
</dbReference>
<dbReference type="GO" id="GO:1902916">
    <property type="term" value="P:positive regulation of protein polyubiquitination"/>
    <property type="evidence" value="ECO:0007669"/>
    <property type="project" value="Ensembl"/>
</dbReference>
<dbReference type="GO" id="GO:0048661">
    <property type="term" value="P:positive regulation of smooth muscle cell proliferation"/>
    <property type="evidence" value="ECO:0007669"/>
    <property type="project" value="Ensembl"/>
</dbReference>
<dbReference type="GO" id="GO:0043161">
    <property type="term" value="P:proteasome-mediated ubiquitin-dependent protein catabolic process"/>
    <property type="evidence" value="ECO:0000315"/>
    <property type="project" value="UniProtKB"/>
</dbReference>
<dbReference type="GO" id="GO:0070936">
    <property type="term" value="P:protein K48-linked ubiquitination"/>
    <property type="evidence" value="ECO:0000315"/>
    <property type="project" value="UniProtKB"/>
</dbReference>
<dbReference type="GO" id="GO:0070534">
    <property type="term" value="P:protein K63-linked ubiquitination"/>
    <property type="evidence" value="ECO:0000314"/>
    <property type="project" value="UniProtKB"/>
</dbReference>
<dbReference type="GO" id="GO:0042981">
    <property type="term" value="P:regulation of apoptotic process"/>
    <property type="evidence" value="ECO:0000314"/>
    <property type="project" value="MGI"/>
</dbReference>
<dbReference type="GO" id="GO:0051726">
    <property type="term" value="P:regulation of cell cycle"/>
    <property type="evidence" value="ECO:0000318"/>
    <property type="project" value="GO_Central"/>
</dbReference>
<dbReference type="GO" id="GO:0031146">
    <property type="term" value="P:SCF-dependent proteasomal ubiquitin-dependent protein catabolic process"/>
    <property type="evidence" value="ECO:0000318"/>
    <property type="project" value="GO_Central"/>
</dbReference>
<dbReference type="CDD" id="cd22114">
    <property type="entry name" value="F-box_FBXL1"/>
    <property type="match status" value="1"/>
</dbReference>
<dbReference type="FunFam" id="3.80.10.10:FF:000105">
    <property type="entry name" value="S-phase kinase-associated protein 2"/>
    <property type="match status" value="1"/>
</dbReference>
<dbReference type="Gene3D" id="3.80.10.10">
    <property type="entry name" value="Ribonuclease Inhibitor"/>
    <property type="match status" value="1"/>
</dbReference>
<dbReference type="IDEAL" id="IID00321"/>
<dbReference type="InterPro" id="IPR036047">
    <property type="entry name" value="F-box-like_dom_sf"/>
</dbReference>
<dbReference type="InterPro" id="IPR001810">
    <property type="entry name" value="F-box_dom"/>
</dbReference>
<dbReference type="InterPro" id="IPR006553">
    <property type="entry name" value="Leu-rich_rpt_Cys-con_subtyp"/>
</dbReference>
<dbReference type="InterPro" id="IPR032675">
    <property type="entry name" value="LRR_dom_sf"/>
</dbReference>
<dbReference type="PANTHER" id="PTHR46976">
    <property type="entry name" value="PROTEIN ARABIDILLO 1"/>
    <property type="match status" value="1"/>
</dbReference>
<dbReference type="PANTHER" id="PTHR46976:SF1">
    <property type="entry name" value="PROTEIN ARABIDILLO 1"/>
    <property type="match status" value="1"/>
</dbReference>
<dbReference type="Pfam" id="PF12937">
    <property type="entry name" value="F-box-like"/>
    <property type="match status" value="1"/>
</dbReference>
<dbReference type="SMART" id="SM00256">
    <property type="entry name" value="FBOX"/>
    <property type="match status" value="1"/>
</dbReference>
<dbReference type="SMART" id="SM00367">
    <property type="entry name" value="LRR_CC"/>
    <property type="match status" value="5"/>
</dbReference>
<dbReference type="SUPFAM" id="SSF81383">
    <property type="entry name" value="F-box domain"/>
    <property type="match status" value="1"/>
</dbReference>
<dbReference type="SUPFAM" id="SSF52047">
    <property type="entry name" value="RNI-like"/>
    <property type="match status" value="1"/>
</dbReference>
<dbReference type="PROSITE" id="PS50181">
    <property type="entry name" value="FBOX"/>
    <property type="match status" value="1"/>
</dbReference>
<comment type="function">
    <text evidence="1 5 7 8 9 10 11 12 13 14 15 17 18 19 22 23 25 27">Substrate recognition component of a SCF (SKP1-CUL1-F-box protein) E3 ubiquitin-protein ligase complex which mediates the ubiquitination and subsequent proteasomal degradation of target proteins involved in cell cycle progression, signal transduction and transcription (PubMed:9736735, PubMed:11931757, PubMed:12435635, PubMed:12769844, PubMed:12840033, PubMed:15342634, PubMed:15668399, PubMed:15949444, PubMed:16103164, PubMed:16262255, PubMed:16581786, PubMed:16951159, PubMed:17908926, PubMed:17962192, PubMed:22464731, PubMed:22770219, PubMed:32267835). Specifically recognizes phosphorylated CDKN1B/p27kip and is involved in regulation of G1/S transition (By similarity). Degradation of CDKN1B/p27kip also requires CKS1 (By similarity). Recognizes target proteins ORC1, CDT1, RBL2, KMT2A/MLL1, CDK9, RAG2, NBN, FOXO1, UBP43, YTHDF2, and probably MYC, TOB1 and TAL1 (PubMed:11931757, PubMed:12435635, PubMed:12769844, PubMed:12840033, PubMed:15342634, PubMed:15668399, PubMed:15949444, PubMed:16103164, PubMed:16581786, PubMed:16951159, PubMed:17908926, PubMed:17962192, PubMed:22464731, PubMed:32267835). Degradation of TAL1 also requires STUB1 (PubMed:17962192). Recognizes CDKN1A in association with CCNE1 or CCNE2 and CDK2 (PubMed:9736735, PubMed:16262255). Promotes ubiquitination and destruction of CDH1 in a CK1-dependent manner, thereby regulating cell migration (PubMed:22770219). Following phosphorylation in response to DNA damage, mediates 'Lys-63'-linked ubiquitination of NBN, promoting ATM recruitment to DNA damage sites and DNA repair via homologous recombination (PubMed:22464731).</text>
</comment>
<comment type="function">
    <text evidence="24">Through the ubiquitin-mediated proteasomal degradation of hepatitis C virus non-structural protein 5A, has an antiviral activity towards that virus.</text>
</comment>
<comment type="pathway">
    <text evidence="22">Protein modification; protein ubiquitination.</text>
</comment>
<comment type="subunit">
    <text evidence="1 4 5 6 7 8 9 10 11 12 15 16 17 18 19 20 24 26">Part of a SCF(SKP2) complex consisting of CUL1, RBX1, SKP1 and SKP2. Component of a SCF(SKP2)-like complex containing CUL1, SKP1, TRIM21 and SKP2. Interacts directly with CUL1 and SKP1. Interacts with CKS1. Interacts with ASB2 which is the substrate-recognition component of a probable ECS E3 ubiquitin-protein ligase complex; ASB2 is likely to bridge the formation of dimeric E3-ubiquitin-protein ligase complexes composed of an ECS complex and an SCF(SKP2) complex (PubMed:21119685). Interacts with the cyclin-A-CDK2 complex. Interacts with ORC1, phosphorylated CDT1, phosphorylated RBL2, ELF4, phosphorylated RAG2, FOXO1, UBP43, MYC, TOB1, TAL1 and KMT2A/MLL1. Interacts with TRIM21. Interacts with cyclin-E (By similarity). Interacts with IFI27; promotes the ubiquitin-mediated proteasomal degradation of hepatitis C virus/HCV non-structural protein NS5A (PubMed:27194766). Interacts with CARM1 (By similarity).</text>
</comment>
<comment type="subunit">
    <text evidence="24">(Microbial infection) Interacts with hepatitis C virus/HCV non-structural protein NS5A; promotes the ubiquitin-mediated proteasomal degradation of NS5A.</text>
</comment>
<comment type="interaction">
    <interactant intactId="EBI-456291">
        <id>Q13309</id>
    </interactant>
    <interactant intactId="EBI-7793316">
        <id>A5D8W4</id>
        <label>CDH1</label>
    </interactant>
    <organismsDiffer>false</organismsDiffer>
    <experiments>2</experiments>
</comment>
<comment type="interaction">
    <interactant intactId="EBI-456291">
        <id>Q13309</id>
    </interactant>
    <interactant intactId="EBI-375077">
        <id>P38936</id>
        <label>CDKN1A</label>
    </interactant>
    <organismsDiffer>false</organismsDiffer>
    <experiments>4</experiments>
</comment>
<comment type="interaction">
    <interactant intactId="EBI-456291">
        <id>Q13309</id>
    </interactant>
    <interactant intactId="EBI-519280">
        <id>P46527</id>
        <label>CDKN1B</label>
    </interactant>
    <organismsDiffer>false</organismsDiffer>
    <experiments>4</experiments>
</comment>
<comment type="interaction">
    <interactant intactId="EBI-456291">
        <id>Q13309</id>
    </interactant>
    <interactant intactId="EBI-456371">
        <id>P61024</id>
        <label>CKS1B</label>
    </interactant>
    <organismsDiffer>false</organismsDiffer>
    <experiments>9</experiments>
</comment>
<comment type="interaction">
    <interactant intactId="EBI-456291">
        <id>Q13309</id>
    </interactant>
    <interactant intactId="EBI-359390">
        <id>Q13616</id>
        <label>CUL1</label>
    </interactant>
    <organismsDiffer>false</organismsDiffer>
    <experiments>15</experiments>
</comment>
<comment type="interaction">
    <interactant intactId="EBI-456291">
        <id>Q13309</id>
    </interactant>
    <interactant intactId="EBI-975493">
        <id>P28562</id>
        <label>DUSP1</label>
    </interactant>
    <organismsDiffer>false</organismsDiffer>
    <experiments>3</experiments>
</comment>
<comment type="interaction">
    <interactant intactId="EBI-456291">
        <id>Q13309</id>
    </interactant>
    <interactant intactId="EBI-447295">
        <id>Q09472</id>
        <label>EP300</label>
    </interactant>
    <organismsDiffer>false</organismsDiffer>
    <experiments>3</experiments>
</comment>
<comment type="interaction">
    <interactant intactId="EBI-456291">
        <id>Q13309</id>
    </interactant>
    <interactant intactId="EBI-724997">
        <id>Q9UM11</id>
        <label>FZR1</label>
    </interactant>
    <organismsDiffer>false</organismsDiffer>
    <experiments>4</experiments>
</comment>
<comment type="interaction">
    <interactant intactId="EBI-456291">
        <id>Q13309</id>
    </interactant>
    <interactant intactId="EBI-447544">
        <id>P01106</id>
        <label>MYC</label>
    </interactant>
    <organismsDiffer>false</organismsDiffer>
    <experiments>2</experiments>
</comment>
<comment type="interaction">
    <interactant intactId="EBI-456291">
        <id>Q13309</id>
    </interactant>
    <interactant intactId="EBI-374847">
        <id>Q13415</id>
        <label>ORC1</label>
    </interactant>
    <organismsDiffer>false</organismsDiffer>
    <experiments>2</experiments>
</comment>
<comment type="interaction">
    <interactant intactId="EBI-456291">
        <id>Q13309</id>
    </interactant>
    <interactant intactId="EBI-398523">
        <id>P62877</id>
        <label>RBX1</label>
    </interactant>
    <organismsDiffer>false</organismsDiffer>
    <experiments>4</experiments>
</comment>
<comment type="interaction">
    <interactant intactId="EBI-456291">
        <id>Q13309</id>
    </interactant>
    <interactant intactId="EBI-724621">
        <id>Q9NTG7</id>
        <label>SIRT3</label>
    </interactant>
    <organismsDiffer>false</organismsDiffer>
    <experiments>5</experiments>
</comment>
<comment type="interaction">
    <interactant intactId="EBI-456291">
        <id>Q13309</id>
    </interactant>
    <interactant intactId="EBI-307486">
        <id>P63208</id>
        <label>SKP1</label>
    </interactant>
    <organismsDiffer>false</organismsDiffer>
    <experiments>18</experiments>
</comment>
<comment type="interaction">
    <interactant intactId="EBI-456291">
        <id>Q13309</id>
    </interactant>
    <interactant intactId="EBI-456291">
        <id>Q13309</id>
        <label>SKP2</label>
    </interactant>
    <organismsDiffer>false</organismsDiffer>
    <experiments>3</experiments>
</comment>
<comment type="interaction">
    <interactant intactId="EBI-456291">
        <id>Q13309</id>
    </interactant>
    <interactant intactId="EBI-984420">
        <id>P09803</id>
        <label>Cdh1</label>
    </interactant>
    <organismsDiffer>true</organismsDiffer>
    <experiments>2</experiments>
</comment>
<comment type="interaction">
    <interactant intactId="EBI-456291">
        <id>Q13309</id>
    </interactant>
    <interactant intactId="EBI-7418293">
        <id>Q4AE16</id>
        <label>X</label>
    </interactant>
    <organismsDiffer>true</organismsDiffer>
    <experiments>3</experiments>
</comment>
<comment type="interaction">
    <interactant intactId="EBI-15490084">
        <id>Q13309-1</id>
    </interactant>
    <interactant intactId="EBI-591370">
        <id>Q03164</id>
        <label>KMT2A</label>
    </interactant>
    <organismsDiffer>false</organismsDiffer>
    <experiments>2</experiments>
</comment>
<comment type="interaction">
    <interactant intactId="EBI-15490084">
        <id>Q13309-1</id>
    </interactant>
    <interactant intactId="EBI-307497">
        <id>P63208-1</id>
        <label>SKP1</label>
    </interactant>
    <organismsDiffer>false</organismsDiffer>
    <experiments>7</experiments>
</comment>
<comment type="interaction">
    <interactant intactId="EBI-7791408">
        <id>Q13309-2</id>
    </interactant>
    <interactant intactId="EBI-354213">
        <id>P35232</id>
        <label>PHB1</label>
    </interactant>
    <organismsDiffer>false</organismsDiffer>
    <experiments>2</experiments>
</comment>
<comment type="interaction">
    <interactant intactId="EBI-7791408">
        <id>Q13309-2</id>
    </interactant>
    <interactant intactId="EBI-307486">
        <id>P63208</id>
        <label>SKP1</label>
    </interactant>
    <organismsDiffer>false</organismsDiffer>
    <experiments>5</experiments>
</comment>
<comment type="subcellular location">
    <subcellularLocation>
        <location evidence="23">Cytoplasm</location>
    </subcellularLocation>
    <subcellularLocation>
        <location evidence="23">Nucleus</location>
    </subcellularLocation>
</comment>
<comment type="alternative products">
    <event type="alternative splicing"/>
    <isoform>
        <id>Q13309-1</id>
        <name>1</name>
        <name>SKP2-alpha</name>
        <sequence type="displayed"/>
    </isoform>
    <isoform>
        <id>Q13309-2</id>
        <name>2</name>
        <name>SKP2-beta</name>
        <sequence type="described" ref="VSP_008432"/>
    </isoform>
    <isoform>
        <id>Q13309-4</id>
        <name>3</name>
        <sequence type="described" ref="VSP_044931 VSP_044932"/>
    </isoform>
</comment>
<comment type="PTM">
    <text evidence="1">Phosphorylated on serine and threonine resudues in response to DNA damage, promoting 'Lys-63'-linked ubiquitination of NBN.</text>
</comment>
<comment type="PTM">
    <text evidence="21">Ubiquitinated by the APC/C complex, leading to its degradation by the proteasome. Deubiquitinated by USP13.</text>
</comment>
<comment type="PTM">
    <text evidence="23">Acetylation at Lys-68 and Lys-71 increases stability through impairment of APC/C-mediated proteolysis and promotes cytoplasmic retention. Deacetylated by SIRT3.</text>
</comment>
<comment type="sequence caution" evidence="31">
    <conflict type="erroneous initiation">
        <sequence resource="EMBL-CDS" id="AAC50242"/>
    </conflict>
    <text>Extended N-terminus.</text>
</comment>
<comment type="sequence caution" evidence="31">
    <conflict type="miscellaneous discrepancy">
        <sequence resource="EMBL-CDS" id="BAB87202"/>
    </conflict>
    <text>Probable cloning artifact.</text>
</comment>
<name>SKP2_HUMAN</name>
<evidence type="ECO:0000250" key="1">
    <source>
        <dbReference type="UniProtKB" id="Q9Z0Z3"/>
    </source>
</evidence>
<evidence type="ECO:0000255" key="2">
    <source>
        <dbReference type="PROSITE-ProRule" id="PRU00080"/>
    </source>
</evidence>
<evidence type="ECO:0000256" key="3">
    <source>
        <dbReference type="SAM" id="MobiDB-lite"/>
    </source>
</evidence>
<evidence type="ECO:0000269" key="4">
    <source>
    </source>
</evidence>
<evidence type="ECO:0000269" key="5">
    <source>
    </source>
</evidence>
<evidence type="ECO:0000269" key="6">
    <source>
    </source>
</evidence>
<evidence type="ECO:0000269" key="7">
    <source>
    </source>
</evidence>
<evidence type="ECO:0000269" key="8">
    <source>
    </source>
</evidence>
<evidence type="ECO:0000269" key="9">
    <source>
    </source>
</evidence>
<evidence type="ECO:0000269" key="10">
    <source>
    </source>
</evidence>
<evidence type="ECO:0000269" key="11">
    <source>
    </source>
</evidence>
<evidence type="ECO:0000269" key="12">
    <source>
    </source>
</evidence>
<evidence type="ECO:0000269" key="13">
    <source>
    </source>
</evidence>
<evidence type="ECO:0000269" key="14">
    <source>
    </source>
</evidence>
<evidence type="ECO:0000269" key="15">
    <source>
    </source>
</evidence>
<evidence type="ECO:0000269" key="16">
    <source>
    </source>
</evidence>
<evidence type="ECO:0000269" key="17">
    <source>
    </source>
</evidence>
<evidence type="ECO:0000269" key="18">
    <source>
    </source>
</evidence>
<evidence type="ECO:0000269" key="19">
    <source>
    </source>
</evidence>
<evidence type="ECO:0000269" key="20">
    <source>
    </source>
</evidence>
<evidence type="ECO:0000269" key="21">
    <source>
    </source>
</evidence>
<evidence type="ECO:0000269" key="22">
    <source>
    </source>
</evidence>
<evidence type="ECO:0000269" key="23">
    <source>
    </source>
</evidence>
<evidence type="ECO:0000269" key="24">
    <source>
    </source>
</evidence>
<evidence type="ECO:0000269" key="25">
    <source>
    </source>
</evidence>
<evidence type="ECO:0000269" key="26">
    <source>
    </source>
</evidence>
<evidence type="ECO:0000269" key="27">
    <source>
    </source>
</evidence>
<evidence type="ECO:0000303" key="28">
    <source>
    </source>
</evidence>
<evidence type="ECO:0000303" key="29">
    <source>
    </source>
</evidence>
<evidence type="ECO:0000303" key="30">
    <source ref="2"/>
</evidence>
<evidence type="ECO:0000305" key="31"/>
<evidence type="ECO:0007744" key="32">
    <source>
    </source>
</evidence>
<evidence type="ECO:0007744" key="33">
    <source>
    </source>
</evidence>
<evidence type="ECO:0007744" key="34">
    <source>
    </source>
</evidence>
<evidence type="ECO:0007744" key="35">
    <source>
    </source>
</evidence>
<evidence type="ECO:0007744" key="36">
    <source>
    </source>
</evidence>
<evidence type="ECO:0007744" key="37">
    <source>
    </source>
</evidence>
<evidence type="ECO:0007744" key="38">
    <source>
    </source>
</evidence>
<evidence type="ECO:0007829" key="39">
    <source>
        <dbReference type="PDB" id="1FQV"/>
    </source>
</evidence>
<evidence type="ECO:0007829" key="40">
    <source>
        <dbReference type="PDB" id="1FS1"/>
    </source>
</evidence>
<evidence type="ECO:0007829" key="41">
    <source>
        <dbReference type="PDB" id="1FS2"/>
    </source>
</evidence>
<evidence type="ECO:0007829" key="42">
    <source>
        <dbReference type="PDB" id="2AST"/>
    </source>
</evidence>
<evidence type="ECO:0007829" key="43">
    <source>
        <dbReference type="PDB" id="7Z8V"/>
    </source>
</evidence>
<evidence type="ECO:0007829" key="44">
    <source>
        <dbReference type="PDB" id="8BYA"/>
    </source>
</evidence>
<evidence type="ECO:0007829" key="45">
    <source>
        <dbReference type="PDB" id="8BYL"/>
    </source>
</evidence>
<evidence type="ECO:0007829" key="46">
    <source>
        <dbReference type="PDB" id="8OR0"/>
    </source>
</evidence>
<sequence length="424" mass="47761">MHRKHLQEIPDLSSNVATSFTWGWDSSKTSELLSGMGVSALEKEEPDSENIPQELLSNLGHPESPPRKRLKSKGSDKDFVIVRRPKLNRENFPGVSWDSLPDELLLGIFSCLCLPELLKVSGVCKRWYRLASDESLWQTLDLTGKNLHPDVTGRLLSQGVIAFRCPRSFMDQPLAEHFSPFRVQHMDLSNSVIEVSTLHGILSQCSKLQNLSLEGLRLSDPIVNTLAKNSNLVRLNLSGCSGFSEFALQTLLSSCSRLDELNLSWCFDFTEKHVQVAVAHVSETITQLNLSGYRKNLQKSDLSTLVRRCPNLVHLDLSDSVMLKNDCFQEFFQLNYLQHLSLSRCYDIIPETLLELGEIPTLKTLQVFGIVPDGTLQLLKEALPHLQINCSHFTTIARPTIGNKKNQEIWGIKCRLTLQKPSCL</sequence>
<feature type="chain" id="PRO_0000119954" description="S-phase kinase-associated protein 2">
    <location>
        <begin position="1"/>
        <end position="424"/>
    </location>
</feature>
<feature type="domain" description="F-box" evidence="2">
    <location>
        <begin position="94"/>
        <end position="140"/>
    </location>
</feature>
<feature type="repeat" description="LRR 1" evidence="4">
    <location>
        <begin position="151"/>
        <end position="176"/>
    </location>
</feature>
<feature type="repeat" description="LRR 2" evidence="4">
    <location>
        <begin position="177"/>
        <end position="204"/>
    </location>
</feature>
<feature type="repeat" description="LRR 3" evidence="4">
    <location>
        <begin position="210"/>
        <end position="234"/>
    </location>
</feature>
<feature type="repeat" description="LRR 4" evidence="4">
    <location>
        <begin position="235"/>
        <end position="257"/>
    </location>
</feature>
<feature type="repeat" description="LRR 5" evidence="4">
    <location>
        <begin position="258"/>
        <end position="284"/>
    </location>
</feature>
<feature type="repeat" description="LRR 6" evidence="4">
    <location>
        <begin position="286"/>
        <end position="308"/>
    </location>
</feature>
<feature type="repeat" description="LRR 7" evidence="4">
    <location>
        <begin position="309"/>
        <end position="330"/>
    </location>
</feature>
<feature type="repeat" description="LRR 8" evidence="4">
    <location>
        <begin position="334"/>
        <end position="356"/>
    </location>
</feature>
<feature type="repeat" description="LRR 9" evidence="4">
    <location>
        <begin position="359"/>
        <end position="378"/>
    </location>
</feature>
<feature type="repeat" description="LRR 10" evidence="4">
    <location>
        <begin position="380"/>
        <end position="401"/>
    </location>
</feature>
<feature type="region of interest" description="Mediates interaction with hepatitis C virus non-structural protein NS5A" evidence="24">
    <location>
        <begin position="1"/>
        <end position="220"/>
    </location>
</feature>
<feature type="region of interest" description="Disordered" evidence="3">
    <location>
        <begin position="39"/>
        <end position="73"/>
    </location>
</feature>
<feature type="region of interest" description="Mediates interaction with IFI27" evidence="24">
    <location>
        <begin position="402"/>
        <end position="424"/>
    </location>
</feature>
<feature type="short sequence motif" description="Nuclear localization signal" evidence="23">
    <location>
        <begin position="67"/>
        <end position="73"/>
    </location>
</feature>
<feature type="modified residue" description="Phosphoserine" evidence="32 34 35 36 37 38">
    <location>
        <position position="64"/>
    </location>
</feature>
<feature type="modified residue" description="N6-acetyllysine; by p300/EP300" evidence="23">
    <location>
        <position position="68"/>
    </location>
</feature>
<feature type="modified residue" description="N6-acetyllysine; by p300/EP300" evidence="23">
    <location>
        <position position="71"/>
    </location>
</feature>
<feature type="modified residue" description="Phosphoserine" evidence="38">
    <location>
        <position position="72"/>
    </location>
</feature>
<feature type="modified residue" description="Phosphoserine" evidence="38">
    <location>
        <position position="75"/>
    </location>
</feature>
<feature type="modified residue" description="Phosphoserine" evidence="33 38">
    <location>
        <position position="179"/>
    </location>
</feature>
<feature type="splice variant" id="VSP_044931" description="In isoform 3." evidence="28">
    <location>
        <begin position="1"/>
        <end position="169"/>
    </location>
</feature>
<feature type="splice variant" id="VSP_044932" description="In isoform 3." evidence="28">
    <location>
        <begin position="180"/>
        <end position="224"/>
    </location>
</feature>
<feature type="splice variant" id="VSP_008432" description="In isoform 2." evidence="29 30">
    <original>ELGEIPTLKTLQVFGIVPDGTLQLLKEALPHLQINCSHFTTIARPTIGNKKNQEIWGIKCRLTLQKPSCL</original>
    <variation>LVTRAGVRIRLDSDIGCPQTYRTSKLKSSHKLFCQHVRVICIFVCDFYFYRLVLKQ</variation>
    <location>
        <begin position="355"/>
        <end position="424"/>
    </location>
</feature>
<feature type="sequence variant" id="VAR_016984" description="In dbSNP:rs3913486.">
    <original>P</original>
    <variation>L</variation>
    <location>
        <position position="85"/>
    </location>
</feature>
<feature type="sequence variant" id="VAR_016985" description="In dbSNP:rs3913487.">
    <original>L</original>
    <variation>I</variation>
    <location>
        <position position="87"/>
    </location>
</feature>
<feature type="sequence conflict" description="In Ref. 1; AAC50242." evidence="31" ref="1">
    <original>H</original>
    <variation>D</variation>
    <location>
        <position position="185"/>
    </location>
</feature>
<feature type="sequence conflict" description="In Ref. 1; AAC50242." evidence="31" ref="1">
    <location>
        <position position="215"/>
    </location>
</feature>
<feature type="sequence conflict" description="In Ref. 1; AAC50242." evidence="31" ref="1">
    <original>S</original>
    <variation>P</variation>
    <location>
        <position position="238"/>
    </location>
</feature>
<feature type="sequence conflict" description="In Ref. 1; AAC50242." evidence="31" ref="1">
    <original>S</original>
    <variation>P</variation>
    <location>
        <position position="241"/>
    </location>
</feature>
<feature type="sequence conflict" description="In Ref. 1; AAC50242." evidence="31" ref="1">
    <original>SEFA</original>
    <variation>PKFP</variation>
    <location>
        <begin position="244"/>
        <end position="247"/>
    </location>
</feature>
<feature type="sequence conflict" description="In Ref. 1; AAC50242." evidence="31" ref="1">
    <original>L</original>
    <variation>F</variation>
    <location>
        <position position="251"/>
    </location>
</feature>
<feature type="sequence conflict" description="In Ref. 1; AAC50242." evidence="31" ref="1">
    <original>S</original>
    <variation>P</variation>
    <location>
        <position position="256"/>
    </location>
</feature>
<feature type="sequence conflict" description="In Ref. 1; AAC50242." evidence="31" ref="1">
    <original>D</original>
    <variation>N</variation>
    <location>
        <position position="268"/>
    </location>
</feature>
<feature type="sequence conflict" description="In Ref. 1; AAC50242." evidence="31" ref="1">
    <original>I</original>
    <variation>M</variation>
    <location>
        <position position="285"/>
    </location>
</feature>
<feature type="sequence conflict" description="In Ref. 1; AAC50242." evidence="31" ref="1">
    <original>D</original>
    <variation>N</variation>
    <location>
        <position position="319"/>
    </location>
</feature>
<feature type="sequence conflict" description="In Ref. 1; AAC50242." evidence="31" ref="1">
    <original>F</original>
    <variation>S</variation>
    <location>
        <position position="332"/>
    </location>
</feature>
<feature type="strand" evidence="42">
    <location>
        <begin position="97"/>
        <end position="100"/>
    </location>
</feature>
<feature type="helix" evidence="40">
    <location>
        <begin position="102"/>
        <end position="109"/>
    </location>
</feature>
<feature type="helix" evidence="40">
    <location>
        <begin position="114"/>
        <end position="116"/>
    </location>
</feature>
<feature type="helix" evidence="40">
    <location>
        <begin position="117"/>
        <end position="121"/>
    </location>
</feature>
<feature type="helix" evidence="40">
    <location>
        <begin position="125"/>
        <end position="131"/>
    </location>
</feature>
<feature type="helix" evidence="40">
    <location>
        <begin position="134"/>
        <end position="136"/>
    </location>
</feature>
<feature type="strand" evidence="42">
    <location>
        <begin position="137"/>
        <end position="141"/>
    </location>
</feature>
<feature type="strand" evidence="44">
    <location>
        <begin position="144"/>
        <end position="146"/>
    </location>
</feature>
<feature type="helix" evidence="42">
    <location>
        <begin position="149"/>
        <end position="157"/>
    </location>
</feature>
<feature type="strand" evidence="42">
    <location>
        <begin position="161"/>
        <end position="164"/>
    </location>
</feature>
<feature type="strand" evidence="41">
    <location>
        <begin position="180"/>
        <end position="182"/>
    </location>
</feature>
<feature type="strand" evidence="42">
    <location>
        <begin position="185"/>
        <end position="187"/>
    </location>
</feature>
<feature type="helix" evidence="42">
    <location>
        <begin position="195"/>
        <end position="202"/>
    </location>
</feature>
<feature type="strand" evidence="42">
    <location>
        <begin position="209"/>
        <end position="212"/>
    </location>
</feature>
<feature type="strand" evidence="46">
    <location>
        <begin position="213"/>
        <end position="215"/>
    </location>
</feature>
<feature type="helix" evidence="42">
    <location>
        <begin position="220"/>
        <end position="226"/>
    </location>
</feature>
<feature type="strand" evidence="42">
    <location>
        <begin position="233"/>
        <end position="236"/>
    </location>
</feature>
<feature type="helix" evidence="42">
    <location>
        <begin position="245"/>
        <end position="254"/>
    </location>
</feature>
<feature type="strand" evidence="42">
    <location>
        <begin position="260"/>
        <end position="262"/>
    </location>
</feature>
<feature type="helix" evidence="42">
    <location>
        <begin position="271"/>
        <end position="280"/>
    </location>
</feature>
<feature type="strand" evidence="42">
    <location>
        <begin position="287"/>
        <end position="289"/>
    </location>
</feature>
<feature type="helix" evidence="42">
    <location>
        <begin position="294"/>
        <end position="296"/>
    </location>
</feature>
<feature type="helix" evidence="42">
    <location>
        <begin position="299"/>
        <end position="308"/>
    </location>
</feature>
<feature type="strand" evidence="42">
    <location>
        <begin position="313"/>
        <end position="316"/>
    </location>
</feature>
<feature type="strand" evidence="45">
    <location>
        <begin position="317"/>
        <end position="319"/>
    </location>
</feature>
<feature type="helix" evidence="42">
    <location>
        <begin position="325"/>
        <end position="333"/>
    </location>
</feature>
<feature type="strand" evidence="42">
    <location>
        <begin position="339"/>
        <end position="341"/>
    </location>
</feature>
<feature type="strand" evidence="45">
    <location>
        <begin position="342"/>
        <end position="344"/>
    </location>
</feature>
<feature type="helix" evidence="42">
    <location>
        <begin position="350"/>
        <end position="358"/>
    </location>
</feature>
<feature type="strand" evidence="42">
    <location>
        <begin position="364"/>
        <end position="366"/>
    </location>
</feature>
<feature type="turn" evidence="43">
    <location>
        <begin position="368"/>
        <end position="370"/>
    </location>
</feature>
<feature type="helix" evidence="42">
    <location>
        <begin position="376"/>
        <end position="382"/>
    </location>
</feature>
<feature type="strand" evidence="42">
    <location>
        <begin position="386"/>
        <end position="389"/>
    </location>
</feature>
<feature type="strand" evidence="39">
    <location>
        <begin position="402"/>
        <end position="404"/>
    </location>
</feature>
<feature type="strand" evidence="45">
    <location>
        <begin position="409"/>
        <end position="411"/>
    </location>
</feature>
<feature type="strand" evidence="42">
    <location>
        <begin position="415"/>
        <end position="417"/>
    </location>
</feature>
<protein>
    <recommendedName>
        <fullName>S-phase kinase-associated protein 2</fullName>
    </recommendedName>
    <alternativeName>
        <fullName>Cyclin-A/CDK2-associated protein p45</fullName>
    </alternativeName>
    <alternativeName>
        <fullName>F-box protein Skp2</fullName>
    </alternativeName>
    <alternativeName>
        <fullName>F-box/LRR-repeat protein 1</fullName>
    </alternativeName>
    <alternativeName>
        <fullName>p45skp2</fullName>
    </alternativeName>
</protein>
<proteinExistence type="evidence at protein level"/>
<organism>
    <name type="scientific">Homo sapiens</name>
    <name type="common">Human</name>
    <dbReference type="NCBI Taxonomy" id="9606"/>
    <lineage>
        <taxon>Eukaryota</taxon>
        <taxon>Metazoa</taxon>
        <taxon>Chordata</taxon>
        <taxon>Craniata</taxon>
        <taxon>Vertebrata</taxon>
        <taxon>Euteleostomi</taxon>
        <taxon>Mammalia</taxon>
        <taxon>Eutheria</taxon>
        <taxon>Euarchontoglires</taxon>
        <taxon>Primates</taxon>
        <taxon>Haplorrhini</taxon>
        <taxon>Catarrhini</taxon>
        <taxon>Hominidae</taxon>
        <taxon>Homo</taxon>
    </lineage>
</organism>
<gene>
    <name type="primary">SKP2</name>
    <name type="synonym">FBXL1</name>
</gene>
<keyword id="KW-0002">3D-structure</keyword>
<keyword id="KW-0007">Acetylation</keyword>
<keyword id="KW-0025">Alternative splicing</keyword>
<keyword id="KW-0051">Antiviral defense</keyword>
<keyword id="KW-0963">Cytoplasm</keyword>
<keyword id="KW-0903">Direct protein sequencing</keyword>
<keyword id="KW-0945">Host-virus interaction</keyword>
<keyword id="KW-0391">Immunity</keyword>
<keyword id="KW-0399">Innate immunity</keyword>
<keyword id="KW-0433">Leucine-rich repeat</keyword>
<keyword id="KW-0539">Nucleus</keyword>
<keyword id="KW-0597">Phosphoprotein</keyword>
<keyword id="KW-1267">Proteomics identification</keyword>
<keyword id="KW-1185">Reference proteome</keyword>
<keyword id="KW-0677">Repeat</keyword>
<keyword id="KW-0832">Ubl conjugation</keyword>
<keyword id="KW-0833">Ubl conjugation pathway</keyword>
<reference key="1">
    <citation type="journal article" date="1995" name="Cell">
        <title>p19Skp1 and p45Skp2 are essential elements of the cyclin A-CDK2 S phase kinase.</title>
        <authorList>
            <person name="Zhang H."/>
            <person name="Kobayashi R."/>
            <person name="Galaktionov K."/>
            <person name="Beach D."/>
        </authorList>
    </citation>
    <scope>NUCLEOTIDE SEQUENCE [MRNA] (ISOFORM 1)</scope>
    <scope>PROTEIN SEQUENCE OF 6-19; 31-58; 80-86 AND 365-372</scope>
    <scope>INTERACTION WITH CYCLIN A-CDK2 COMPLEX</scope>
</reference>
<reference key="2">
    <citation type="submission" date="2000-11" db="EMBL/GenBank/DDBJ databases">
        <title>Human SKP2-like protein.</title>
        <authorList>
            <person name="Yamaguchi T."/>
        </authorList>
    </citation>
    <scope>NUCLEOTIDE SEQUENCE [MRNA] (ISOFORMS 1 AND 2)</scope>
    <source>
        <tissue>Liver</tissue>
    </source>
</reference>
<reference key="3">
    <citation type="submission" date="2001-04" db="EMBL/GenBank/DDBJ databases">
        <title>Androgenic regulation of Skp2 in androgen-dependent and -independent LNCaP human prostate tumor cells.</title>
        <authorList>
            <person name="Kokontis J.M."/>
            <person name="Fukuchi J."/>
            <person name="Liao S."/>
        </authorList>
    </citation>
    <scope>NUCLEOTIDE SEQUENCE [MRNA] (ISOFORM 1)</scope>
    <source>
        <tissue>Prostatic carcinoma</tissue>
    </source>
</reference>
<reference key="4">
    <citation type="journal article" date="2004" name="Nat. Genet.">
        <title>Complete sequencing and characterization of 21,243 full-length human cDNAs.</title>
        <authorList>
            <person name="Ota T."/>
            <person name="Suzuki Y."/>
            <person name="Nishikawa T."/>
            <person name="Otsuki T."/>
            <person name="Sugiyama T."/>
            <person name="Irie R."/>
            <person name="Wakamatsu A."/>
            <person name="Hayashi K."/>
            <person name="Sato H."/>
            <person name="Nagai K."/>
            <person name="Kimura K."/>
            <person name="Makita H."/>
            <person name="Sekine M."/>
            <person name="Obayashi M."/>
            <person name="Nishi T."/>
            <person name="Shibahara T."/>
            <person name="Tanaka T."/>
            <person name="Ishii S."/>
            <person name="Yamamoto J."/>
            <person name="Saito K."/>
            <person name="Kawai Y."/>
            <person name="Isono Y."/>
            <person name="Nakamura Y."/>
            <person name="Nagahari K."/>
            <person name="Murakami K."/>
            <person name="Yasuda T."/>
            <person name="Iwayanagi T."/>
            <person name="Wagatsuma M."/>
            <person name="Shiratori A."/>
            <person name="Sudo H."/>
            <person name="Hosoiri T."/>
            <person name="Kaku Y."/>
            <person name="Kodaira H."/>
            <person name="Kondo H."/>
            <person name="Sugawara M."/>
            <person name="Takahashi M."/>
            <person name="Kanda K."/>
            <person name="Yokoi T."/>
            <person name="Furuya T."/>
            <person name="Kikkawa E."/>
            <person name="Omura Y."/>
            <person name="Abe K."/>
            <person name="Kamihara K."/>
            <person name="Katsuta N."/>
            <person name="Sato K."/>
            <person name="Tanikawa M."/>
            <person name="Yamazaki M."/>
            <person name="Ninomiya K."/>
            <person name="Ishibashi T."/>
            <person name="Yamashita H."/>
            <person name="Murakawa K."/>
            <person name="Fujimori K."/>
            <person name="Tanai H."/>
            <person name="Kimata M."/>
            <person name="Watanabe M."/>
            <person name="Hiraoka S."/>
            <person name="Chiba Y."/>
            <person name="Ishida S."/>
            <person name="Ono Y."/>
            <person name="Takiguchi S."/>
            <person name="Watanabe S."/>
            <person name="Yosida M."/>
            <person name="Hotuta T."/>
            <person name="Kusano J."/>
            <person name="Kanehori K."/>
            <person name="Takahashi-Fujii A."/>
            <person name="Hara H."/>
            <person name="Tanase T.-O."/>
            <person name="Nomura Y."/>
            <person name="Togiya S."/>
            <person name="Komai F."/>
            <person name="Hara R."/>
            <person name="Takeuchi K."/>
            <person name="Arita M."/>
            <person name="Imose N."/>
            <person name="Musashino K."/>
            <person name="Yuuki H."/>
            <person name="Oshima A."/>
            <person name="Sasaki N."/>
            <person name="Aotsuka S."/>
            <person name="Yoshikawa Y."/>
            <person name="Matsunawa H."/>
            <person name="Ichihara T."/>
            <person name="Shiohata N."/>
            <person name="Sano S."/>
            <person name="Moriya S."/>
            <person name="Momiyama H."/>
            <person name="Satoh N."/>
            <person name="Takami S."/>
            <person name="Terashima Y."/>
            <person name="Suzuki O."/>
            <person name="Nakagawa S."/>
            <person name="Senoh A."/>
            <person name="Mizoguchi H."/>
            <person name="Goto Y."/>
            <person name="Shimizu F."/>
            <person name="Wakebe H."/>
            <person name="Hishigaki H."/>
            <person name="Watanabe T."/>
            <person name="Sugiyama A."/>
            <person name="Takemoto M."/>
            <person name="Kawakami B."/>
            <person name="Yamazaki M."/>
            <person name="Watanabe K."/>
            <person name="Kumagai A."/>
            <person name="Itakura S."/>
            <person name="Fukuzumi Y."/>
            <person name="Fujimori Y."/>
            <person name="Komiyama M."/>
            <person name="Tashiro H."/>
            <person name="Tanigami A."/>
            <person name="Fujiwara T."/>
            <person name="Ono T."/>
            <person name="Yamada K."/>
            <person name="Fujii Y."/>
            <person name="Ozaki K."/>
            <person name="Hirao M."/>
            <person name="Ohmori Y."/>
            <person name="Kawabata A."/>
            <person name="Hikiji T."/>
            <person name="Kobatake N."/>
            <person name="Inagaki H."/>
            <person name="Ikema Y."/>
            <person name="Okamoto S."/>
            <person name="Okitani R."/>
            <person name="Kawakami T."/>
            <person name="Noguchi S."/>
            <person name="Itoh T."/>
            <person name="Shigeta K."/>
            <person name="Senba T."/>
            <person name="Matsumura K."/>
            <person name="Nakajima Y."/>
            <person name="Mizuno T."/>
            <person name="Morinaga M."/>
            <person name="Sasaki M."/>
            <person name="Togashi T."/>
            <person name="Oyama M."/>
            <person name="Hata H."/>
            <person name="Watanabe M."/>
            <person name="Komatsu T."/>
            <person name="Mizushima-Sugano J."/>
            <person name="Satoh T."/>
            <person name="Shirai Y."/>
            <person name="Takahashi Y."/>
            <person name="Nakagawa K."/>
            <person name="Okumura K."/>
            <person name="Nagase T."/>
            <person name="Nomura N."/>
            <person name="Kikuchi H."/>
            <person name="Masuho Y."/>
            <person name="Yamashita R."/>
            <person name="Nakai K."/>
            <person name="Yada T."/>
            <person name="Nakamura Y."/>
            <person name="Ohara O."/>
            <person name="Isogai T."/>
            <person name="Sugano S."/>
        </authorList>
    </citation>
    <scope>NUCLEOTIDE SEQUENCE [LARGE SCALE MRNA] (ISOFORMS 1 AND 3)</scope>
    <source>
        <tissue>Thalamus</tissue>
    </source>
</reference>
<reference key="5">
    <citation type="journal article" date="2004" name="Nature">
        <title>The DNA sequence and comparative analysis of human chromosome 5.</title>
        <authorList>
            <person name="Schmutz J."/>
            <person name="Martin J."/>
            <person name="Terry A."/>
            <person name="Couronne O."/>
            <person name="Grimwood J."/>
            <person name="Lowry S."/>
            <person name="Gordon L.A."/>
            <person name="Scott D."/>
            <person name="Xie G."/>
            <person name="Huang W."/>
            <person name="Hellsten U."/>
            <person name="Tran-Gyamfi M."/>
            <person name="She X."/>
            <person name="Prabhakar S."/>
            <person name="Aerts A."/>
            <person name="Altherr M."/>
            <person name="Bajorek E."/>
            <person name="Black S."/>
            <person name="Branscomb E."/>
            <person name="Caoile C."/>
            <person name="Challacombe J.F."/>
            <person name="Chan Y.M."/>
            <person name="Denys M."/>
            <person name="Detter J.C."/>
            <person name="Escobar J."/>
            <person name="Flowers D."/>
            <person name="Fotopulos D."/>
            <person name="Glavina T."/>
            <person name="Gomez M."/>
            <person name="Gonzales E."/>
            <person name="Goodstein D."/>
            <person name="Grigoriev I."/>
            <person name="Groza M."/>
            <person name="Hammon N."/>
            <person name="Hawkins T."/>
            <person name="Haydu L."/>
            <person name="Israni S."/>
            <person name="Jett J."/>
            <person name="Kadner K."/>
            <person name="Kimball H."/>
            <person name="Kobayashi A."/>
            <person name="Lopez F."/>
            <person name="Lou Y."/>
            <person name="Martinez D."/>
            <person name="Medina C."/>
            <person name="Morgan J."/>
            <person name="Nandkeshwar R."/>
            <person name="Noonan J.P."/>
            <person name="Pitluck S."/>
            <person name="Pollard M."/>
            <person name="Predki P."/>
            <person name="Priest J."/>
            <person name="Ramirez L."/>
            <person name="Retterer J."/>
            <person name="Rodriguez A."/>
            <person name="Rogers S."/>
            <person name="Salamov A."/>
            <person name="Salazar A."/>
            <person name="Thayer N."/>
            <person name="Tice H."/>
            <person name="Tsai M."/>
            <person name="Ustaszewska A."/>
            <person name="Vo N."/>
            <person name="Wheeler J."/>
            <person name="Wu K."/>
            <person name="Yang J."/>
            <person name="Dickson M."/>
            <person name="Cheng J.-F."/>
            <person name="Eichler E.E."/>
            <person name="Olsen A."/>
            <person name="Pennacchio L.A."/>
            <person name="Rokhsar D.S."/>
            <person name="Richardson P."/>
            <person name="Lucas S.M."/>
            <person name="Myers R.M."/>
            <person name="Rubin E.M."/>
        </authorList>
    </citation>
    <scope>NUCLEOTIDE SEQUENCE [LARGE SCALE GENOMIC DNA]</scope>
</reference>
<reference key="6">
    <citation type="submission" date="2005-07" db="EMBL/GenBank/DDBJ databases">
        <authorList>
            <person name="Mural R.J."/>
            <person name="Istrail S."/>
            <person name="Sutton G.G."/>
            <person name="Florea L."/>
            <person name="Halpern A.L."/>
            <person name="Mobarry C.M."/>
            <person name="Lippert R."/>
            <person name="Walenz B."/>
            <person name="Shatkay H."/>
            <person name="Dew I."/>
            <person name="Miller J.R."/>
            <person name="Flanigan M.J."/>
            <person name="Edwards N.J."/>
            <person name="Bolanos R."/>
            <person name="Fasulo D."/>
            <person name="Halldorsson B.V."/>
            <person name="Hannenhalli S."/>
            <person name="Turner R."/>
            <person name="Yooseph S."/>
            <person name="Lu F."/>
            <person name="Nusskern D.R."/>
            <person name="Shue B.C."/>
            <person name="Zheng X.H."/>
            <person name="Zhong F."/>
            <person name="Delcher A.L."/>
            <person name="Huson D.H."/>
            <person name="Kravitz S.A."/>
            <person name="Mouchard L."/>
            <person name="Reinert K."/>
            <person name="Remington K.A."/>
            <person name="Clark A.G."/>
            <person name="Waterman M.S."/>
            <person name="Eichler E.E."/>
            <person name="Adams M.D."/>
            <person name="Hunkapiller M.W."/>
            <person name="Myers E.W."/>
            <person name="Venter J.C."/>
        </authorList>
    </citation>
    <scope>NUCLEOTIDE SEQUENCE [LARGE SCALE GENOMIC DNA]</scope>
</reference>
<reference key="7">
    <citation type="journal article" date="2004" name="Genome Res.">
        <title>The status, quality, and expansion of the NIH full-length cDNA project: the Mammalian Gene Collection (MGC).</title>
        <authorList>
            <consortium name="The MGC Project Team"/>
        </authorList>
    </citation>
    <scope>NUCLEOTIDE SEQUENCE [LARGE SCALE MRNA] (ISOFORM 2)</scope>
    <source>
        <tissue>Placenta</tissue>
    </source>
</reference>
<reference key="8">
    <citation type="journal article" date="1998" name="Proc. Natl. Acad. Sci. U.S.A.">
        <title>Human CUL-1 associates with the SKP1/SKP2 complex and regulates p21(CIP1/WAF1) and cyclin D proteins.</title>
        <authorList>
            <person name="Yu Z.K."/>
            <person name="Gervais J.L."/>
            <person name="Zhang H."/>
        </authorList>
    </citation>
    <scope>FUNCTION IN UBIQUITINATION OF CDKN1A</scope>
</reference>
<reference key="9">
    <citation type="journal article" date="2002" name="Genes Dev.">
        <title>The pRb-related protein p130 is regulated by phosphorylation-dependent proteolysis via the protein-ubiquitin ligase SCF(Skp2).</title>
        <authorList>
            <person name="Tedesco D."/>
            <person name="Lukas J."/>
            <person name="Reed S.I."/>
        </authorList>
    </citation>
    <scope>INTERACTION WITH RBL2</scope>
    <scope>FUNCTION IN UBIQUITINATION OF RBL2</scope>
</reference>
<reference key="10">
    <citation type="journal article" date="2002" name="Mol. Cell">
        <title>Human origin recognition complex large subunit is degraded by ubiquitin-mediated proteolysis after initiation of DNA replication.</title>
        <authorList>
            <person name="Mendez J."/>
            <person name="Zou-Yang X.H."/>
            <person name="Kim S.Y."/>
            <person name="Hidaka M."/>
            <person name="Tansey W.P."/>
            <person name="Stillman B."/>
        </authorList>
    </citation>
    <scope>INTERACTION WITH ORC1</scope>
    <scope>FUNCTION IN UBIQUITINATION OF ORC1</scope>
</reference>
<reference key="11">
    <citation type="journal article" date="2003" name="J. Biol. Chem.">
        <title>The SCF(Skp2) ubiquitin ligase complex interacts with the human replication licensing factor Cdt1 and regulates Cdt1 degradation.</title>
        <authorList>
            <person name="Li X."/>
            <person name="Zhao Q."/>
            <person name="Liao R."/>
            <person name="Sun P."/>
            <person name="Wu X."/>
        </authorList>
    </citation>
    <scope>INTERACTION WITH CDT1</scope>
    <scope>FUNCTION IN UBIQUITINATION OF CDT1</scope>
</reference>
<reference key="12">
    <citation type="journal article" date="2003" name="Mol. Cell">
        <title>The F-box protein Skp2 participates in c-Myc proteosomal degradation and acts as a cofactor for c-Myc-regulated transcription.</title>
        <authorList>
            <person name="von der Lehr N."/>
            <person name="Johansson S."/>
            <person name="Wu S."/>
            <person name="Bahram F."/>
            <person name="Castell A."/>
            <person name="Cetinkaya C."/>
            <person name="Hydbring P."/>
            <person name="Weidung I."/>
            <person name="Nakayama K."/>
            <person name="Nakayama K.I."/>
            <person name="Soderberg O."/>
            <person name="Kerppola T.K."/>
            <person name="Larsson L.G."/>
        </authorList>
    </citation>
    <scope>INTERACTION WITH MYC</scope>
    <scope>FUNCTION IN UBIQUITINATION OF MYC</scope>
</reference>
<reference key="13">
    <citation type="journal article" date="2004" name="J. Biol. Chem.">
        <title>The ISG15 isopeptidase UBP43 is regulated by proteolysis via the SCFSkp2 ubiquitin ligase.</title>
        <authorList>
            <person name="Tokarz S."/>
            <person name="Berset C."/>
            <person name="La Rue J."/>
            <person name="Friedman K."/>
            <person name="Nakayama K."/>
            <person name="Nakayama K."/>
            <person name="Zhang D.E."/>
            <person name="Lanker S."/>
        </authorList>
    </citation>
    <scope>INTERACTION WITH UBP43</scope>
    <scope>FUNCTION IN UBIQUITINATION OF UBP43</scope>
</reference>
<reference key="14">
    <citation type="journal article" date="2005" name="Biochemistry">
        <title>Ubiquitination of p21Cip1/WAF1 by SCFSkp2: substrate requirement and ubiquitination site selection.</title>
        <authorList>
            <person name="Wang W."/>
            <person name="Nacusi L."/>
            <person name="Sheaff R.J."/>
            <person name="Liu X."/>
        </authorList>
    </citation>
    <scope>FUNCTION IN UBIQUITINATION OF CDKN1A</scope>
</reference>
<reference key="15">
    <citation type="journal article" date="2005" name="Mol. Cell">
        <title>Ubiquitylation of RAG-2 by Skp2-SCF links destruction of the V(D)J recombinase to the cell cycle.</title>
        <authorList>
            <person name="Jiang H."/>
            <person name="Chang F.C."/>
            <person name="Ross A.E."/>
            <person name="Lee J."/>
            <person name="Nakayama K."/>
            <person name="Nakayama K."/>
            <person name="Desiderio S."/>
        </authorList>
    </citation>
    <scope>INTERACTION WITH RAG2</scope>
    <scope>FUNCTION IN UBIQUITINATION OF RAG2</scope>
</reference>
<reference key="16">
    <citation type="journal article" date="2005" name="J. Virol.">
        <title>Ubiquitylation of Cdk9 by Skp2 facilitates optimal Tat transactivation.</title>
        <authorList>
            <person name="Barboric M."/>
            <person name="Zhang F."/>
            <person name="Besenicar M."/>
            <person name="Plemenitas A."/>
            <person name="Peterlin B.M."/>
        </authorList>
    </citation>
    <scope>FUNCTION IN UBIQUITINATION OF CDK9</scope>
</reference>
<reference key="17">
    <citation type="journal article" date="2005" name="Proc. Natl. Acad. Sci. U.S.A.">
        <title>Skp2 inhibits FOXO1 in tumor suppression through ubiquitin-mediated degradation.</title>
        <authorList>
            <person name="Huang H."/>
            <person name="Regan K.M."/>
            <person name="Wang F."/>
            <person name="Wang D."/>
            <person name="Smith D.I."/>
            <person name="van Deursen J.M."/>
            <person name="Tindall D.J."/>
        </authorList>
    </citation>
    <scope>INTERACTION WITH FOXO1</scope>
    <scope>FUNCTION IN UBIQUITINATION OF FOXO1</scope>
</reference>
<reference key="18">
    <citation type="journal article" date="2006" name="Cancer Res.">
        <title>Degradation of Tob1 mediated by SCFSkp2-dependent ubiquitination.</title>
        <authorList>
            <person name="Hiramatsu Y."/>
            <person name="Kitagawa K."/>
            <person name="Suzuki T."/>
            <person name="Uchida C."/>
            <person name="Hattori T."/>
            <person name="Kikuchi H."/>
            <person name="Oda T."/>
            <person name="Hatakeyama S."/>
            <person name="Nakayama K.I."/>
            <person name="Yamamoto T."/>
            <person name="Konno H."/>
            <person name="Kitagawa M."/>
        </authorList>
    </citation>
    <scope>INTERACTION WITH TOB1</scope>
    <scope>FUNCTION IN UBIQUITINATION OF TOB1</scope>
</reference>
<reference key="19">
    <citation type="journal article" date="2006" name="Cell">
        <title>Global, in vivo, and site-specific phosphorylation dynamics in signaling networks.</title>
        <authorList>
            <person name="Olsen J.V."/>
            <person name="Blagoev B."/>
            <person name="Gnad F."/>
            <person name="Macek B."/>
            <person name="Kumar C."/>
            <person name="Mortensen P."/>
            <person name="Mann M."/>
        </authorList>
    </citation>
    <scope>PHOSPHORYLATION [LARGE SCALE ANALYSIS] AT SER-64</scope>
    <scope>IDENTIFICATION BY MASS SPECTROMETRY [LARGE SCALE ANALYSIS]</scope>
    <source>
        <tissue>Cervix carcinoma</tissue>
    </source>
</reference>
<reference key="20">
    <citation type="journal article" date="2006" name="Mol. Cell. Biol.">
        <title>The ETS protein MEF is regulated by phosphorylation-dependent proteolysis via the protein-ubiquitin ligase SCFSkp2.</title>
        <authorList>
            <person name="Liu Y."/>
            <person name="Hedvat C.V."/>
            <person name="Mao S."/>
            <person name="Zhu X.H."/>
            <person name="Yao J."/>
            <person name="Nguyen H."/>
            <person name="Koff A."/>
            <person name="Nimer S.D."/>
        </authorList>
    </citation>
    <scope>INTERACTION WITH ELF4</scope>
    <scope>FUNCTION IN UBIQUITINATION OF ELF4</scope>
</reference>
<reference key="21">
    <citation type="journal article" date="2006" name="Mol. Cell. Biol.">
        <title>Regulation of p27 degradation and S-phase progression by Ro52 RING finger protein.</title>
        <authorList>
            <person name="Sabile A."/>
            <person name="Meyer A.M."/>
            <person name="Wirbelauer C."/>
            <person name="Hess D."/>
            <person name="Kogel U."/>
            <person name="Scheffner M."/>
            <person name="Krek W."/>
        </authorList>
    </citation>
    <scope>INTERACTION WITH THE SCF(SKP2)-LIKE COMPLEX</scope>
    <scope>INTERACTION WITH TRIM21</scope>
</reference>
<reference key="22">
    <citation type="journal article" date="2007" name="Genes Dev.">
        <title>Bimodal degradation of MLL by SCFSkp2 and APCCdc20 assures cell cycle execution: a critical regulatory circuit lost in leukemogenic MLL fusions.</title>
        <authorList>
            <person name="Liu H."/>
            <person name="Cheng E.H."/>
            <person name="Hsieh J.J."/>
        </authorList>
    </citation>
    <scope>INTERACTION WITH KMT2A/MLL1</scope>
    <scope>FUNCTION IN UBIQUITINATION OF KMT2A/MLL1</scope>
</reference>
<reference key="23">
    <citation type="journal article" date="2008" name="J. Biol. Chem.">
        <title>Ubiquitination and degradation of Tal1/SCL are induced by Notch signaling and depend on Skp2 and CHIP.</title>
        <authorList>
            <person name="Nie L."/>
            <person name="Wu H."/>
            <person name="Sun X.H."/>
        </authorList>
    </citation>
    <scope>INTERACTION WITH TAL1</scope>
    <scope>FUNCTION IN UBIQUITINATION OF TAL1</scope>
</reference>
<reference key="24">
    <citation type="journal article" date="2008" name="J. Proteome Res.">
        <title>Combining protein-based IMAC, peptide-based IMAC, and MudPIT for efficient phosphoproteomic analysis.</title>
        <authorList>
            <person name="Cantin G.T."/>
            <person name="Yi W."/>
            <person name="Lu B."/>
            <person name="Park S.K."/>
            <person name="Xu T."/>
            <person name="Lee J.-D."/>
            <person name="Yates J.R. III"/>
        </authorList>
    </citation>
    <scope>PHOSPHORYLATION [LARGE SCALE ANALYSIS] AT SER-179</scope>
    <scope>IDENTIFICATION BY MASS SPECTROMETRY [LARGE SCALE ANALYSIS]</scope>
    <source>
        <tissue>Cervix carcinoma</tissue>
    </source>
</reference>
<reference key="25">
    <citation type="journal article" date="2008" name="Mol. Cell">
        <title>Kinase-selective enrichment enables quantitative phosphoproteomics of the kinome across the cell cycle.</title>
        <authorList>
            <person name="Daub H."/>
            <person name="Olsen J.V."/>
            <person name="Bairlein M."/>
            <person name="Gnad F."/>
            <person name="Oppermann F.S."/>
            <person name="Korner R."/>
            <person name="Greff Z."/>
            <person name="Keri G."/>
            <person name="Stemmann O."/>
            <person name="Mann M."/>
        </authorList>
    </citation>
    <scope>PHOSPHORYLATION [LARGE SCALE ANALYSIS] AT SER-64</scope>
    <scope>IDENTIFICATION BY MASS SPECTROMETRY [LARGE SCALE ANALYSIS]</scope>
    <source>
        <tissue>Cervix carcinoma</tissue>
    </source>
</reference>
<reference key="26">
    <citation type="journal article" date="2008" name="Proc. Natl. Acad. Sci. U.S.A.">
        <title>A quantitative atlas of mitotic phosphorylation.</title>
        <authorList>
            <person name="Dephoure N."/>
            <person name="Zhou C."/>
            <person name="Villen J."/>
            <person name="Beausoleil S.A."/>
            <person name="Bakalarski C.E."/>
            <person name="Elledge S.J."/>
            <person name="Gygi S.P."/>
        </authorList>
    </citation>
    <scope>PHOSPHORYLATION [LARGE SCALE ANALYSIS] AT SER-64</scope>
    <scope>IDENTIFICATION BY MASS SPECTROMETRY [LARGE SCALE ANALYSIS]</scope>
    <source>
        <tissue>Cervix carcinoma</tissue>
    </source>
</reference>
<reference key="27">
    <citation type="journal article" date="2010" name="Sci. Signal.">
        <title>Quantitative phosphoproteomics reveals widespread full phosphorylation site occupancy during mitosis.</title>
        <authorList>
            <person name="Olsen J.V."/>
            <person name="Vermeulen M."/>
            <person name="Santamaria A."/>
            <person name="Kumar C."/>
            <person name="Miller M.L."/>
            <person name="Jensen L.J."/>
            <person name="Gnad F."/>
            <person name="Cox J."/>
            <person name="Jensen T.S."/>
            <person name="Nigg E.A."/>
            <person name="Brunak S."/>
            <person name="Mann M."/>
        </authorList>
    </citation>
    <scope>PHOSPHORYLATION [LARGE SCALE ANALYSIS] AT SER-64</scope>
    <scope>IDENTIFICATION BY MASS SPECTROMETRY [LARGE SCALE ANALYSIS]</scope>
    <source>
        <tissue>Cervix carcinoma</tissue>
    </source>
</reference>
<reference key="28">
    <citation type="journal article" date="2011" name="BMC Syst. Biol.">
        <title>Initial characterization of the human central proteome.</title>
        <authorList>
            <person name="Burkard T.R."/>
            <person name="Planyavsky M."/>
            <person name="Kaupe I."/>
            <person name="Breitwieser F.P."/>
            <person name="Buerckstuemmer T."/>
            <person name="Bennett K.L."/>
            <person name="Superti-Furga G."/>
            <person name="Colinge J."/>
        </authorList>
    </citation>
    <scope>IDENTIFICATION BY MASS SPECTROMETRY [LARGE SCALE ANALYSIS]</scope>
</reference>
<reference key="29">
    <citation type="journal article" date="2011" name="Cell Res.">
        <title>Notch-induced Asb2 expression promotes protein ubiquitination by forming non-canonical E3 ligase complexes.</title>
        <authorList>
            <person name="Nie L."/>
            <person name="Zhao Y."/>
            <person name="Wu W."/>
            <person name="Yang Y.Z."/>
            <person name="Wang H.C."/>
            <person name="Sun X.H."/>
        </authorList>
    </citation>
    <scope>INTERACTION WITH ASB2</scope>
</reference>
<reference key="30">
    <citation type="journal article" date="2011" name="Proc. Natl. Acad. Sci. U.S.A.">
        <title>Ubiquitin-recognition protein Ufd1 couples the endoplasmic reticulum (ER) stress response to cell cycle control.</title>
        <authorList>
            <person name="Chen M."/>
            <person name="Gutierrez G.J."/>
            <person name="Ronai Z.A."/>
        </authorList>
    </citation>
    <scope>DEUBIQUITINATION BY USP13</scope>
</reference>
<reference key="31">
    <citation type="journal article" date="2011" name="Sci. Signal.">
        <title>System-wide temporal characterization of the proteome and phosphoproteome of human embryonic stem cell differentiation.</title>
        <authorList>
            <person name="Rigbolt K.T."/>
            <person name="Prokhorova T.A."/>
            <person name="Akimov V."/>
            <person name="Henningsen J."/>
            <person name="Johansen P.T."/>
            <person name="Kratchmarova I."/>
            <person name="Kassem M."/>
            <person name="Mann M."/>
            <person name="Olsen J.V."/>
            <person name="Blagoev B."/>
        </authorList>
    </citation>
    <scope>PHOSPHORYLATION [LARGE SCALE ANALYSIS] AT SER-64</scope>
    <scope>IDENTIFICATION BY MASS SPECTROMETRY [LARGE SCALE ANALYSIS]</scope>
</reference>
<reference key="32">
    <citation type="journal article" date="2012" name="Cell">
        <title>Acetylation-dependent regulation of Skp2 function.</title>
        <authorList>
            <person name="Inuzuka H."/>
            <person name="Gao D."/>
            <person name="Finley L.W."/>
            <person name="Yang W."/>
            <person name="Wan L."/>
            <person name="Fukushima H."/>
            <person name="Chin Y.R."/>
            <person name="Zhai B."/>
            <person name="Shaik S."/>
            <person name="Lau A.W."/>
            <person name="Wang Z."/>
            <person name="Gygi S.P."/>
            <person name="Nakayama K."/>
            <person name="Teruya-Feldstein J."/>
            <person name="Toker A."/>
            <person name="Haigis M.C."/>
            <person name="Pandolfi P.P."/>
            <person name="Wei W."/>
        </authorList>
    </citation>
    <scope>FUNCTION</scope>
    <scope>ACETYLATION AT LYS-68 AND LYS-71</scope>
    <scope>NUCLEAR LOCALIZATION SIGNAL</scope>
    <scope>SUBCELLULAR LOCATION</scope>
</reference>
<reference key="33">
    <citation type="journal article" date="2012" name="Mol. Cell">
        <title>Skp2 E3 ligase integrates ATM activation and homologous recombination repair by ubiquitinating NBS1.</title>
        <authorList>
            <person name="Wu J."/>
            <person name="Zhang X."/>
            <person name="Zhang L."/>
            <person name="Wu C.Y."/>
            <person name="Rezaeian A.H."/>
            <person name="Chan C.H."/>
            <person name="Li J.M."/>
            <person name="Wang J."/>
            <person name="Gao Y."/>
            <person name="Han F."/>
            <person name="Jeong Y.S."/>
            <person name="Yuan X."/>
            <person name="Khanna K.K."/>
            <person name="Jin J."/>
            <person name="Zeng Y.X."/>
            <person name="Lin H.K."/>
        </authorList>
    </citation>
    <scope>FUNCTION</scope>
    <scope>PATHWAY</scope>
</reference>
<reference key="34">
    <citation type="journal article" date="2013" name="J. Proteome Res.">
        <title>Toward a comprehensive characterization of a human cancer cell phosphoproteome.</title>
        <authorList>
            <person name="Zhou H."/>
            <person name="Di Palma S."/>
            <person name="Preisinger C."/>
            <person name="Peng M."/>
            <person name="Polat A.N."/>
            <person name="Heck A.J."/>
            <person name="Mohammed S."/>
        </authorList>
    </citation>
    <scope>PHOSPHORYLATION [LARGE SCALE ANALYSIS] AT SER-64; SER-72; SER-75 AND SER-179</scope>
    <scope>IDENTIFICATION BY MASS SPECTROMETRY [LARGE SCALE ANALYSIS]</scope>
    <source>
        <tissue>Cervix carcinoma</tissue>
        <tissue>Erythroleukemia</tissue>
    </source>
</reference>
<reference key="35">
    <citation type="journal article" date="2016" name="J. Virol.">
        <title>ISG12a Restricts Hepatitis C Virus Infection through the Ubiquitination-Dependent Degradation Pathway.</title>
        <authorList>
            <person name="Xue B."/>
            <person name="Yang D."/>
            <person name="Wang J."/>
            <person name="Xu Y."/>
            <person name="Wang X."/>
            <person name="Qin Y."/>
            <person name="Tian R."/>
            <person name="Chen S."/>
            <person name="Xie Q."/>
            <person name="Liu N."/>
            <person name="Zhu H."/>
        </authorList>
    </citation>
    <scope>FUNCTION</scope>
    <scope>INTERACTION WITH IFI27 AND HEPATITIS C VIRUS NON-STRUCTURAL PROTEIN NS5A</scope>
    <scope>REGION</scope>
</reference>
<reference key="36">
    <citation type="journal article" date="2020" name="PLoS Biol.">
        <title>YTHDF2 promotes mitotic entry and is regulated by cell cycle mediators.</title>
        <authorList>
            <person name="Fei Q."/>
            <person name="Zou Z."/>
            <person name="Roundtree I.A."/>
            <person name="Sun H.L."/>
            <person name="He C."/>
        </authorList>
    </citation>
    <scope>FUNCTION IN UBIQUITINATION OF YTHDF2</scope>
</reference>
<reference key="37">
    <citation type="journal article" date="2000" name="Nature">
        <title>Insights into SCF ubiquitin ligases from the structure of the Skp1-Skp2 complex.</title>
        <authorList>
            <person name="Schulman B.A."/>
            <person name="Carrano A.C."/>
            <person name="Jeffrey P.D."/>
            <person name="Bowen Z."/>
            <person name="Kinnucan E.R.E."/>
            <person name="Finnin M.S."/>
            <person name="Elledge S.J."/>
            <person name="Harper J.W."/>
            <person name="Pagano M."/>
            <person name="Pavletich N.P."/>
        </authorList>
    </citation>
    <scope>X-RAY CRYSTALLOGRAPHY (1.8 ANGSTROMS) OF 89-424 IN COMPLEX WITH 1-147 OF SKP1</scope>
    <scope>LEUCINE-RICH REPEATS</scope>
</reference>
<reference key="38">
    <citation type="journal article" date="2002" name="Nature">
        <title>Structure of the Cul1-Rbx1-Skp1-F box Skp2 SCF ubiquitin ligase complex.</title>
        <authorList>
            <person name="Zheng N."/>
            <person name="Schulman B.A."/>
            <person name="Song L."/>
            <person name="Miller J.J."/>
            <person name="Jeffrey P.D."/>
            <person name="Wang P."/>
            <person name="Chu C."/>
            <person name="Koepp D.M."/>
            <person name="Elledge S.J."/>
            <person name="Pagano M."/>
            <person name="Conaway R.C."/>
            <person name="Conaway J.W."/>
            <person name="Harper J.W."/>
            <person name="Pavletich N.P."/>
        </authorList>
    </citation>
    <scope>X-RAY CRYSTALLOGRAPHY (3.1 ANGSTROMS) OF 97-137 IN COMPLEX WITH CUL1; SKP1 AND RBX1</scope>
    <scope>INTERACTION WITH CKS1</scope>
</reference>
<accession>Q13309</accession>
<accession>A8K5E0</accession>
<accession>B4DJT4</accession>
<accession>Q8TDZ0</accession>
<accession>Q8TDZ1</accession>
<accession>Q9BV69</accession>